<sequence>MNKYWIRTSMVFLILSILAACGSDDTNLTLVTDEREDLVREFVTEYKETMVEAYNTGNFNELEPFLITNNSFYHSLRRYVSDSHSEGNTKELLDFQVHQVFEDPEGDLYVDATERVEVIEHGQAIEVERDVRFELTKGGADSFRIVTIRHVKS</sequence>
<gene>
    <name type="ordered locus">BpOF4_00885</name>
</gene>
<reference key="1">
    <citation type="journal article" date="1993" name="J. Biol. Chem.">
        <title>Cloning of the cta operon from alkaliphilic Bacillus firmus OF4 and characterization of the pH-regulated cytochrome caa3 oxidase it encodes.</title>
        <authorList>
            <person name="Quirk P.G."/>
            <person name="Hicks D.B."/>
            <person name="Krulwich T.A."/>
        </authorList>
    </citation>
    <scope>NUCLEOTIDE SEQUENCE [GENOMIC DNA]</scope>
</reference>
<reference key="2">
    <citation type="journal article" date="2011" name="Environ. Microbiol.">
        <title>Genome of alkaliphilic Bacillus pseudofirmus OF4 reveals adaptations that support the ability to grow in an external pH range from 7.5 to 11.4.</title>
        <authorList>
            <person name="Janto B."/>
            <person name="Ahmed A."/>
            <person name="Ito M."/>
            <person name="Liu J."/>
            <person name="Hicks D.B."/>
            <person name="Pagni S."/>
            <person name="Fackelmayer O.J."/>
            <person name="Smith T.A."/>
            <person name="Earl J."/>
            <person name="Elbourne L.D."/>
            <person name="Hassan K."/>
            <person name="Paulsen I.T."/>
            <person name="Kolsto A.B."/>
            <person name="Tourasse N.J."/>
            <person name="Ehrlich G.D."/>
            <person name="Boissy R."/>
            <person name="Ivey D.M."/>
            <person name="Li G."/>
            <person name="Xue Y."/>
            <person name="Ma Y."/>
            <person name="Hu F.Z."/>
            <person name="Krulwich T.A."/>
        </authorList>
    </citation>
    <scope>NUCLEOTIDE SEQUENCE [LARGE SCALE GENOMIC DNA]</scope>
    <source>
        <strain>ATCC BAA-2126 / JCM 17055 / OF4</strain>
    </source>
</reference>
<feature type="chain" id="PRO_0000066184" description="Uncharacterized protein BpOF4_00885">
    <location>
        <begin position="1"/>
        <end position="153"/>
    </location>
</feature>
<protein>
    <recommendedName>
        <fullName>Uncharacterized protein BpOF4_00885</fullName>
    </recommendedName>
    <alternativeName>
        <fullName>ORF3</fullName>
    </alternativeName>
</protein>
<organism>
    <name type="scientific">Alkalihalophilus pseudofirmus (strain ATCC BAA-2126 / JCM 17055 / OF4)</name>
    <name type="common">Bacillus pseudofirmus</name>
    <dbReference type="NCBI Taxonomy" id="398511"/>
    <lineage>
        <taxon>Bacteria</taxon>
        <taxon>Bacillati</taxon>
        <taxon>Bacillota</taxon>
        <taxon>Bacilli</taxon>
        <taxon>Bacillales</taxon>
        <taxon>Bacillaceae</taxon>
        <taxon>Alkalihalophilus</taxon>
    </lineage>
</organism>
<name>Y177_ALKPO</name>
<dbReference type="EMBL" id="M94110">
    <property type="protein sequence ID" value="AAA22370.1"/>
    <property type="molecule type" value="Genomic_DNA"/>
</dbReference>
<dbReference type="EMBL" id="CP001878">
    <property type="protein sequence ID" value="ADC48246.1"/>
    <property type="molecule type" value="Genomic_DNA"/>
</dbReference>
<dbReference type="RefSeq" id="WP_012959528.1">
    <property type="nucleotide sequence ID" value="NC_013791.2"/>
</dbReference>
<dbReference type="KEGG" id="bpf:BpOF4_00885"/>
<dbReference type="eggNOG" id="ENOG5030D13">
    <property type="taxonomic scope" value="Bacteria"/>
</dbReference>
<dbReference type="HOGENOM" id="CLU_1700697_0_0_9"/>
<dbReference type="Proteomes" id="UP000001544">
    <property type="component" value="Chromosome"/>
</dbReference>
<dbReference type="Pfam" id="PF22819">
    <property type="entry name" value="TcaA_5th"/>
    <property type="match status" value="1"/>
</dbReference>
<proteinExistence type="predicted"/>
<accession>Q04445</accession>
<accession>D3FU44</accession>
<keyword id="KW-1185">Reference proteome</keyword>